<feature type="chain" id="PRO_0000105598" description="HTH-type transcriptional regulator BudR">
    <location>
        <begin position="1"/>
        <end position="290"/>
    </location>
</feature>
<feature type="domain" description="HTH lysR-type" evidence="1">
    <location>
        <begin position="1"/>
        <end position="58"/>
    </location>
</feature>
<feature type="DNA-binding region" description="H-T-H motif" evidence="1">
    <location>
        <begin position="18"/>
        <end position="37"/>
    </location>
</feature>
<keyword id="KW-0238">DNA-binding</keyword>
<keyword id="KW-0804">Transcription</keyword>
<keyword id="KW-0805">Transcription regulation</keyword>
<gene>
    <name type="primary">budR</name>
</gene>
<comment type="function">
    <text>Regulator of the budABC operon for 2,3-butanediol synthesis.</text>
</comment>
<comment type="similarity">
    <text evidence="2">Belongs to the LysR transcriptional regulatory family.</text>
</comment>
<proteinExistence type="inferred from homology"/>
<name>BUDR_RAOTE</name>
<dbReference type="EMBL" id="Z48600">
    <property type="protein sequence ID" value="CAA88491.1"/>
    <property type="molecule type" value="Genomic_DNA"/>
</dbReference>
<dbReference type="PIR" id="T09630">
    <property type="entry name" value="T09630"/>
</dbReference>
<dbReference type="RefSeq" id="WP_041145971.1">
    <property type="nucleotide sequence ID" value="NZ_BJNO01000038.1"/>
</dbReference>
<dbReference type="SMR" id="P52666"/>
<dbReference type="OrthoDB" id="5289754at2"/>
<dbReference type="GO" id="GO:0032993">
    <property type="term" value="C:protein-DNA complex"/>
    <property type="evidence" value="ECO:0007669"/>
    <property type="project" value="TreeGrafter"/>
</dbReference>
<dbReference type="GO" id="GO:0003677">
    <property type="term" value="F:DNA binding"/>
    <property type="evidence" value="ECO:0007669"/>
    <property type="project" value="UniProtKB-KW"/>
</dbReference>
<dbReference type="GO" id="GO:0003700">
    <property type="term" value="F:DNA-binding transcription factor activity"/>
    <property type="evidence" value="ECO:0007669"/>
    <property type="project" value="InterPro"/>
</dbReference>
<dbReference type="CDD" id="cd08451">
    <property type="entry name" value="PBP2_BudR"/>
    <property type="match status" value="1"/>
</dbReference>
<dbReference type="FunFam" id="1.10.10.10:FF:000001">
    <property type="entry name" value="LysR family transcriptional regulator"/>
    <property type="match status" value="1"/>
</dbReference>
<dbReference type="Gene3D" id="3.40.190.10">
    <property type="entry name" value="Periplasmic binding protein-like II"/>
    <property type="match status" value="2"/>
</dbReference>
<dbReference type="Gene3D" id="1.10.10.10">
    <property type="entry name" value="Winged helix-like DNA-binding domain superfamily/Winged helix DNA-binding domain"/>
    <property type="match status" value="1"/>
</dbReference>
<dbReference type="InterPro" id="IPR037410">
    <property type="entry name" value="BudR_PBP2"/>
</dbReference>
<dbReference type="InterPro" id="IPR005119">
    <property type="entry name" value="LysR_subst-bd"/>
</dbReference>
<dbReference type="InterPro" id="IPR000847">
    <property type="entry name" value="Tscrpt_reg_HTH_LysR"/>
</dbReference>
<dbReference type="InterPro" id="IPR036388">
    <property type="entry name" value="WH-like_DNA-bd_sf"/>
</dbReference>
<dbReference type="InterPro" id="IPR036390">
    <property type="entry name" value="WH_DNA-bd_sf"/>
</dbReference>
<dbReference type="PANTHER" id="PTHR30346:SF30">
    <property type="entry name" value="SMALL NEUTRAL PROTEASE REGULATORY PROTEIN"/>
    <property type="match status" value="1"/>
</dbReference>
<dbReference type="PANTHER" id="PTHR30346">
    <property type="entry name" value="TRANSCRIPTIONAL DUAL REGULATOR HCAR-RELATED"/>
    <property type="match status" value="1"/>
</dbReference>
<dbReference type="Pfam" id="PF00126">
    <property type="entry name" value="HTH_1"/>
    <property type="match status" value="1"/>
</dbReference>
<dbReference type="Pfam" id="PF03466">
    <property type="entry name" value="LysR_substrate"/>
    <property type="match status" value="1"/>
</dbReference>
<dbReference type="PRINTS" id="PR00039">
    <property type="entry name" value="HTHLYSR"/>
</dbReference>
<dbReference type="SUPFAM" id="SSF53850">
    <property type="entry name" value="Periplasmic binding protein-like II"/>
    <property type="match status" value="1"/>
</dbReference>
<dbReference type="SUPFAM" id="SSF46785">
    <property type="entry name" value="Winged helix' DNA-binding domain"/>
    <property type="match status" value="1"/>
</dbReference>
<dbReference type="PROSITE" id="PS50931">
    <property type="entry name" value="HTH_LYSR"/>
    <property type="match status" value="1"/>
</dbReference>
<organism>
    <name type="scientific">Raoultella terrigena</name>
    <name type="common">Klebsiella terrigena</name>
    <dbReference type="NCBI Taxonomy" id="577"/>
    <lineage>
        <taxon>Bacteria</taxon>
        <taxon>Pseudomonadati</taxon>
        <taxon>Pseudomonadota</taxon>
        <taxon>Gammaproteobacteria</taxon>
        <taxon>Enterobacterales</taxon>
        <taxon>Enterobacteriaceae</taxon>
        <taxon>Klebsiella/Raoultella group</taxon>
        <taxon>Raoultella</taxon>
    </lineage>
</organism>
<protein>
    <recommendedName>
        <fullName>HTH-type transcriptional regulator BudR</fullName>
    </recommendedName>
    <alternativeName>
        <fullName>Bud operon transcriptional regulator</fullName>
    </alternativeName>
</protein>
<reference key="1">
    <citation type="submission" date="1995-03" db="EMBL/GenBank/DDBJ databases">
        <authorList>
            <person name="Mayer D."/>
        </authorList>
    </citation>
    <scope>NUCLEOTIDE SEQUENCE [GENOMIC DNA]</scope>
    <source>
        <strain>ATCC 33257 / DSM 2687 / JCM 1687 / NBRC 14941 / NCTC 13038 / VTT-E-97854</strain>
    </source>
</reference>
<sequence>MELRYLRYFVAVAEARNFTRAAHDLGISQPPLSQQIQRLEREIGTPLLRRLTRGVELTEAGESFYVDACQILALSDAALEKTKGIARGMNGSLVPGITSSAAFHSQIFSLLYQFQQRYPAVALRQVEGNMATLMHALGEAELDIAFVRLPCESSKAFNLRIIAEEPMVIALHRSHPLSGESALSLAQLSDAVPVIFPPEVAPGLYEQVYDGCRRAGVDMSRARQSSQISSSISMVDAGFGFALVPQSMTCICLPNVTWHPLQDASLKTEIAIAWRRFERSRTVKRFLEMF</sequence>
<evidence type="ECO:0000255" key="1">
    <source>
        <dbReference type="PROSITE-ProRule" id="PRU00253"/>
    </source>
</evidence>
<evidence type="ECO:0000305" key="2"/>
<accession>P52666</accession>